<dbReference type="EC" id="1.7.2.1"/>
<dbReference type="EC" id="1.7.99.1"/>
<dbReference type="EMBL" id="U05002">
    <property type="protein sequence ID" value="AAA93118.1"/>
    <property type="molecule type" value="Genomic_DNA"/>
</dbReference>
<dbReference type="EMBL" id="CP000489">
    <property type="protein sequence ID" value="ABL70574.1"/>
    <property type="molecule type" value="Genomic_DNA"/>
</dbReference>
<dbReference type="RefSeq" id="WP_011748767.1">
    <property type="nucleotide sequence ID" value="NC_008686.1"/>
</dbReference>
<dbReference type="SMR" id="Q51700"/>
<dbReference type="STRING" id="318586.Pden_2487"/>
<dbReference type="EnsemblBacteria" id="ABL70574">
    <property type="protein sequence ID" value="ABL70574"/>
    <property type="gene ID" value="Pden_2487"/>
</dbReference>
<dbReference type="GeneID" id="93450880"/>
<dbReference type="KEGG" id="pde:Pden_2487"/>
<dbReference type="eggNOG" id="COG2010">
    <property type="taxonomic scope" value="Bacteria"/>
</dbReference>
<dbReference type="HOGENOM" id="CLU_025262_0_0_5"/>
<dbReference type="OrthoDB" id="5290932at2"/>
<dbReference type="Proteomes" id="UP000000361">
    <property type="component" value="Chromosome 1"/>
</dbReference>
<dbReference type="GO" id="GO:0042597">
    <property type="term" value="C:periplasmic space"/>
    <property type="evidence" value="ECO:0007669"/>
    <property type="project" value="UniProtKB-SubCell"/>
</dbReference>
<dbReference type="GO" id="GO:0009055">
    <property type="term" value="F:electron transfer activity"/>
    <property type="evidence" value="ECO:0007669"/>
    <property type="project" value="InterPro"/>
</dbReference>
<dbReference type="GO" id="GO:0020037">
    <property type="term" value="F:heme binding"/>
    <property type="evidence" value="ECO:0007669"/>
    <property type="project" value="InterPro"/>
</dbReference>
<dbReference type="GO" id="GO:0050418">
    <property type="term" value="F:hydroxylamine reductase activity"/>
    <property type="evidence" value="ECO:0007669"/>
    <property type="project" value="UniProtKB-EC"/>
</dbReference>
<dbReference type="GO" id="GO:0046872">
    <property type="term" value="F:metal ion binding"/>
    <property type="evidence" value="ECO:0007669"/>
    <property type="project" value="UniProtKB-KW"/>
</dbReference>
<dbReference type="GO" id="GO:0050421">
    <property type="term" value="F:nitrite reductase (NO-forming) activity"/>
    <property type="evidence" value="ECO:0007669"/>
    <property type="project" value="UniProtKB-EC"/>
</dbReference>
<dbReference type="CDD" id="cd20779">
    <property type="entry name" value="8prop_hemeD1_NirS"/>
    <property type="match status" value="1"/>
</dbReference>
<dbReference type="FunFam" id="1.10.760.10:FF:000027">
    <property type="entry name" value="Nitrite reductase"/>
    <property type="match status" value="1"/>
</dbReference>
<dbReference type="FunFam" id="2.140.10.20:FF:000001">
    <property type="entry name" value="Nitrite reductase NirS"/>
    <property type="match status" value="1"/>
</dbReference>
<dbReference type="Gene3D" id="2.140.10.20">
    <property type="entry name" value="C-terminal (heme d1) domain of cytochrome cd1-nitrite reductase"/>
    <property type="match status" value="1"/>
</dbReference>
<dbReference type="Gene3D" id="1.10.760.10">
    <property type="entry name" value="Cytochrome c-like domain"/>
    <property type="match status" value="1"/>
</dbReference>
<dbReference type="InterPro" id="IPR009056">
    <property type="entry name" value="Cyt_c-like_dom"/>
</dbReference>
<dbReference type="InterPro" id="IPR036909">
    <property type="entry name" value="Cyt_c-like_dom_sf"/>
</dbReference>
<dbReference type="InterPro" id="IPR003143">
    <property type="entry name" value="Cyt_cd1_C_sf"/>
</dbReference>
<dbReference type="InterPro" id="IPR011048">
    <property type="entry name" value="Haem_d1_sf"/>
</dbReference>
<dbReference type="InterPro" id="IPR051200">
    <property type="entry name" value="Host-pathogen_enzymatic-act"/>
</dbReference>
<dbReference type="PANTHER" id="PTHR47197:SF3">
    <property type="entry name" value="DIHYDRO-HEME D1 DEHYDROGENASE"/>
    <property type="match status" value="1"/>
</dbReference>
<dbReference type="PANTHER" id="PTHR47197">
    <property type="entry name" value="PROTEIN NIRF"/>
    <property type="match status" value="1"/>
</dbReference>
<dbReference type="Pfam" id="PF02239">
    <property type="entry name" value="Cytochrom_D1"/>
    <property type="match status" value="1"/>
</dbReference>
<dbReference type="Pfam" id="PF13442">
    <property type="entry name" value="Cytochrome_CBB3"/>
    <property type="match status" value="1"/>
</dbReference>
<dbReference type="SUPFAM" id="SSF51004">
    <property type="entry name" value="C-terminal (heme d1) domain of cytochrome cd1-nitrite reductase"/>
    <property type="match status" value="1"/>
</dbReference>
<dbReference type="SUPFAM" id="SSF46626">
    <property type="entry name" value="Cytochrome c"/>
    <property type="match status" value="1"/>
</dbReference>
<dbReference type="PROSITE" id="PS51007">
    <property type="entry name" value="CYTC"/>
    <property type="match status" value="1"/>
</dbReference>
<organism>
    <name type="scientific">Paracoccus denitrificans (strain Pd 1222)</name>
    <dbReference type="NCBI Taxonomy" id="318586"/>
    <lineage>
        <taxon>Bacteria</taxon>
        <taxon>Pseudomonadati</taxon>
        <taxon>Pseudomonadota</taxon>
        <taxon>Alphaproteobacteria</taxon>
        <taxon>Rhodobacterales</taxon>
        <taxon>Paracoccaceae</taxon>
        <taxon>Paracoccus</taxon>
    </lineage>
</organism>
<feature type="signal peptide" evidence="1">
    <location>
        <begin position="1"/>
        <end position="29"/>
    </location>
</feature>
<feature type="chain" id="PRO_0000006574" description="Nitrite reductase">
    <location>
        <begin position="30"/>
        <end position="596"/>
    </location>
</feature>
<feature type="domain" description="Cytochrome c" evidence="3">
    <location>
        <begin position="77"/>
        <end position="162"/>
    </location>
</feature>
<feature type="region of interest" description="N-terminal tail">
    <location>
        <begin position="30"/>
        <end position="76"/>
    </location>
</feature>
<feature type="region of interest" description="D1-heme domain">
    <location>
        <begin position="163"/>
        <end position="596"/>
    </location>
</feature>
<feature type="binding site" description="axial binding residue" evidence="2">
    <location>
        <position position="46"/>
    </location>
    <ligand>
        <name>heme c</name>
        <dbReference type="ChEBI" id="CHEBI:61717"/>
    </ligand>
    <ligandPart>
        <name>Fe</name>
        <dbReference type="ChEBI" id="CHEBI:18248"/>
    </ligandPart>
</feature>
<feature type="binding site" description="axial binding residue" evidence="2">
    <location>
        <position position="54"/>
    </location>
    <ligand>
        <name>heme d1</name>
        <dbReference type="ChEBI" id="CHEBI:60549"/>
    </ligand>
    <ligandPart>
        <name>Fe</name>
        <dbReference type="ChEBI" id="CHEBI:18248"/>
    </ligandPart>
</feature>
<feature type="binding site" evidence="2">
    <location>
        <position position="57"/>
    </location>
    <ligand>
        <name>heme d1</name>
        <dbReference type="ChEBI" id="CHEBI:60549"/>
    </ligand>
</feature>
<feature type="binding site" description="covalent" evidence="2">
    <location>
        <position position="94"/>
    </location>
    <ligand>
        <name>heme c</name>
        <dbReference type="ChEBI" id="CHEBI:61717"/>
    </ligand>
</feature>
<feature type="binding site" description="covalent" evidence="2">
    <location>
        <position position="97"/>
    </location>
    <ligand>
        <name>heme c</name>
        <dbReference type="ChEBI" id="CHEBI:61717"/>
    </ligand>
</feature>
<feature type="binding site" description="axial binding residue" evidence="2">
    <location>
        <position position="98"/>
    </location>
    <ligand>
        <name>heme c</name>
        <dbReference type="ChEBI" id="CHEBI:61717"/>
    </ligand>
    <ligandPart>
        <name>Fe</name>
        <dbReference type="ChEBI" id="CHEBI:18248"/>
    </ligandPart>
</feature>
<feature type="binding site" evidence="2">
    <location>
        <position position="108"/>
    </location>
    <ligand>
        <name>heme c</name>
        <dbReference type="ChEBI" id="CHEBI:61717"/>
    </ligand>
</feature>
<feature type="binding site" evidence="2">
    <location>
        <position position="122"/>
    </location>
    <ligand>
        <name>heme c</name>
        <dbReference type="ChEBI" id="CHEBI:61717"/>
    </ligand>
</feature>
<feature type="binding site" evidence="2">
    <location>
        <position position="138"/>
    </location>
    <ligand>
        <name>heme d1</name>
        <dbReference type="ChEBI" id="CHEBI:60549"/>
    </ligand>
</feature>
<feature type="binding site" evidence="2">
    <location>
        <position position="203"/>
    </location>
    <ligand>
        <name>heme d1</name>
        <dbReference type="ChEBI" id="CHEBI:60549"/>
    </ligand>
</feature>
<feature type="binding site" description="axial binding residue" evidence="2">
    <location>
        <position position="229"/>
    </location>
    <ligand>
        <name>heme d1</name>
        <dbReference type="ChEBI" id="CHEBI:60549"/>
    </ligand>
    <ligandPart>
        <name>Fe</name>
        <dbReference type="ChEBI" id="CHEBI:18248"/>
    </ligandPart>
</feature>
<feature type="binding site" evidence="2">
    <location>
        <position position="232"/>
    </location>
    <ligand>
        <name>heme d1</name>
        <dbReference type="ChEBI" id="CHEBI:60549"/>
    </ligand>
</feature>
<feature type="binding site" evidence="2">
    <location>
        <position position="245"/>
    </location>
    <ligand>
        <name>heme d1</name>
        <dbReference type="ChEBI" id="CHEBI:60549"/>
    </ligand>
</feature>
<feature type="binding site" evidence="2">
    <location>
        <position position="272"/>
    </location>
    <ligand>
        <name>heme d1</name>
        <dbReference type="ChEBI" id="CHEBI:60549"/>
    </ligand>
</feature>
<feature type="binding site" evidence="2">
    <location>
        <position position="292"/>
    </location>
    <ligand>
        <name>heme d1</name>
        <dbReference type="ChEBI" id="CHEBI:60549"/>
    </ligand>
</feature>
<feature type="binding site" evidence="2">
    <location>
        <position position="420"/>
    </location>
    <ligand>
        <name>heme d1</name>
        <dbReference type="ChEBI" id="CHEBI:60549"/>
    </ligand>
</feature>
<feature type="binding site" evidence="2">
    <location>
        <position position="536"/>
    </location>
    <ligand>
        <name>heme d1</name>
        <dbReference type="ChEBI" id="CHEBI:60549"/>
    </ligand>
</feature>
<feature type="binding site" evidence="2">
    <location>
        <position position="583"/>
    </location>
    <ligand>
        <name>heme d1</name>
        <dbReference type="ChEBI" id="CHEBI:60549"/>
    </ligand>
</feature>
<name>NIRS_PARDP</name>
<protein>
    <recommendedName>
        <fullName>Nitrite reductase</fullName>
        <ecNumber>1.7.2.1</ecNumber>
    </recommendedName>
    <alternativeName>
        <fullName>Cytochrome cd1</fullName>
    </alternativeName>
    <alternativeName>
        <fullName>Cytochrome oxidase</fullName>
    </alternativeName>
    <alternativeName>
        <fullName>Hydroxylamine reductase</fullName>
        <ecNumber>1.7.99.1</ecNumber>
    </alternativeName>
</protein>
<comment type="function">
    <text>Inactivation of this cytochrome oxidase results in the loss of nitrite and nitric oxide reductase activities, but not of nitrous oxide reductase activity.</text>
</comment>
<comment type="catalytic activity">
    <reaction>
        <text>nitric oxide + Fe(III)-[cytochrome c] + H2O = Fe(II)-[cytochrome c] + nitrite + 2 H(+)</text>
        <dbReference type="Rhea" id="RHEA:15233"/>
        <dbReference type="Rhea" id="RHEA-COMP:10350"/>
        <dbReference type="Rhea" id="RHEA-COMP:14399"/>
        <dbReference type="ChEBI" id="CHEBI:15377"/>
        <dbReference type="ChEBI" id="CHEBI:15378"/>
        <dbReference type="ChEBI" id="CHEBI:16301"/>
        <dbReference type="ChEBI" id="CHEBI:16480"/>
        <dbReference type="ChEBI" id="CHEBI:29033"/>
        <dbReference type="ChEBI" id="CHEBI:29034"/>
        <dbReference type="EC" id="1.7.2.1"/>
    </reaction>
</comment>
<comment type="catalytic activity">
    <reaction>
        <text>A + NH4(+) + H2O = hydroxylamine + AH2 + H(+)</text>
        <dbReference type="Rhea" id="RHEA:22052"/>
        <dbReference type="ChEBI" id="CHEBI:13193"/>
        <dbReference type="ChEBI" id="CHEBI:15377"/>
        <dbReference type="ChEBI" id="CHEBI:15378"/>
        <dbReference type="ChEBI" id="CHEBI:15429"/>
        <dbReference type="ChEBI" id="CHEBI:17499"/>
        <dbReference type="ChEBI" id="CHEBI:28938"/>
        <dbReference type="EC" id="1.7.99.1"/>
    </reaction>
</comment>
<comment type="cofactor">
    <cofactor evidence="2">
        <name>heme c</name>
        <dbReference type="ChEBI" id="CHEBI:61717"/>
    </cofactor>
    <text evidence="2">Binds 1 heme c group covalently per subunit.</text>
</comment>
<comment type="cofactor">
    <cofactor evidence="2">
        <name>heme</name>
        <dbReference type="ChEBI" id="CHEBI:30413"/>
    </cofactor>
    <text evidence="2">Binds 1 heme d1 group per subunit.</text>
</comment>
<comment type="subunit">
    <text evidence="1">Homodimer.</text>
</comment>
<comment type="subcellular location">
    <subcellularLocation>
        <location evidence="1">Periplasm</location>
    </subcellularLocation>
</comment>
<reference key="1">
    <citation type="journal article" date="1994" name="Antonie Van Leeuwenhoek">
        <title>Isolation, sequencing and mutational analysis of a gene cluster involved in nitrite reduction in Paracoccus denitrificans.</title>
        <authorList>
            <person name="de Boer A.P.N."/>
            <person name="Reijnders W.N.M."/>
            <person name="Kuenen J.G."/>
            <person name="Stouthamer A.H."/>
            <person name="van Spanning R.J.M."/>
        </authorList>
    </citation>
    <scope>NUCLEOTIDE SEQUENCE [GENOMIC DNA]</scope>
</reference>
<reference key="2">
    <citation type="submission" date="2006-12" db="EMBL/GenBank/DDBJ databases">
        <title>Complete sequence of chromosome 1 of Paracoccus denitrificans PD1222.</title>
        <authorList>
            <person name="Copeland A."/>
            <person name="Lucas S."/>
            <person name="Lapidus A."/>
            <person name="Barry K."/>
            <person name="Detter J.C."/>
            <person name="Glavina del Rio T."/>
            <person name="Hammon N."/>
            <person name="Israni S."/>
            <person name="Dalin E."/>
            <person name="Tice H."/>
            <person name="Pitluck S."/>
            <person name="Munk A.C."/>
            <person name="Brettin T."/>
            <person name="Bruce D."/>
            <person name="Han C."/>
            <person name="Tapia R."/>
            <person name="Gilna P."/>
            <person name="Schmutz J."/>
            <person name="Larimer F."/>
            <person name="Land M."/>
            <person name="Hauser L."/>
            <person name="Kyrpides N."/>
            <person name="Lykidis A."/>
            <person name="Spiro S."/>
            <person name="Richardson D.J."/>
            <person name="Moir J.W.B."/>
            <person name="Ferguson S.J."/>
            <person name="van Spanning R.J.M."/>
            <person name="Richardson P."/>
        </authorList>
    </citation>
    <scope>NUCLEOTIDE SEQUENCE [LARGE SCALE GENOMIC DNA]</scope>
    <source>
        <strain>Pd 1222</strain>
    </source>
</reference>
<keyword id="KW-0249">Electron transport</keyword>
<keyword id="KW-0349">Heme</keyword>
<keyword id="KW-0408">Iron</keyword>
<keyword id="KW-0479">Metal-binding</keyword>
<keyword id="KW-0560">Oxidoreductase</keyword>
<keyword id="KW-0574">Periplasm</keyword>
<keyword id="KW-1185">Reference proteome</keyword>
<keyword id="KW-0732">Signal</keyword>
<keyword id="KW-0813">Transport</keyword>
<accession>Q51700</accession>
<accession>A1B4Y0</accession>
<sequence>MRQRTPFARPGLLASAALALVLGPLAVAAQEQAAPPKDPAAALEDHKTKTDNRYEPSLDNLAQQDVAALGAPEGIPALSDAQYNEANKIYFERCAGCHGVLRKGATGKALTPDLTRDLGFDYLQSFITYGSPAGMPNWGTSGELTAEQVDLMANYLLLDPAAPPEFGMKEMRESWQVHVAPEDRPTQQENDWDLENLFSVTLRDAGQIALIDGTTYEIKSVLDTGYAVHISRMSASGRYLFVIGRDGKVNMIDLWMKEPATVAEIKIGSEARSIETSKMEGWEDKYAIAGAYWPPQYVIMDGETLEPMKIQSTRGMIYDEQEYHPEPRVAAILASHYRPEFIVNVKETGKILLVDYTDLKNLKTTEIEAERFLHDGGLDGSHRYFITAANARNKLVVIDTKEGKLVAIEDTGGQTPHPGRGANFVHPTFGPVWATSHMGDDSVALIGTDPEGHPDNAWKILDSFPALGGGSLFIKTHPNSQYLYVDATLNPEAEISGSVAVFDTKAMTGDGSDPEFKTLPIAEWAGIAEGQPRVVQGEFNKDGTEVWFSVWNGKDQESALVVVDDKTLELKHVIKDERLVTPTGKFNVYNTMTDTY</sequence>
<gene>
    <name type="primary">nirS</name>
    <name type="ordered locus">Pden_2487</name>
</gene>
<proteinExistence type="inferred from homology"/>
<evidence type="ECO:0000250" key="1"/>
<evidence type="ECO:0000250" key="2">
    <source>
        <dbReference type="UniProtKB" id="P72181"/>
    </source>
</evidence>
<evidence type="ECO:0000255" key="3">
    <source>
        <dbReference type="PROSITE-ProRule" id="PRU00433"/>
    </source>
</evidence>